<evidence type="ECO:0000255" key="1"/>
<evidence type="ECO:0000256" key="2">
    <source>
        <dbReference type="SAM" id="MobiDB-lite"/>
    </source>
</evidence>
<evidence type="ECO:0000269" key="3">
    <source>
    </source>
</evidence>
<evidence type="ECO:0000305" key="4"/>
<evidence type="ECO:0000312" key="5">
    <source>
        <dbReference type="FlyBase" id="FBgn0039536"/>
    </source>
</evidence>
<dbReference type="EMBL" id="AE014297">
    <property type="protein sequence ID" value="AAF56734.5"/>
    <property type="molecule type" value="Genomic_DNA"/>
</dbReference>
<dbReference type="RefSeq" id="NP_651577.4">
    <property type="nucleotide sequence ID" value="NM_143320.4"/>
</dbReference>
<dbReference type="SMR" id="Q9VB11"/>
<dbReference type="BioGRID" id="68206">
    <property type="interactions" value="3"/>
</dbReference>
<dbReference type="ComplexPortal" id="CPX-9062">
    <property type="entry name" value="Sodium leak channel complex"/>
</dbReference>
<dbReference type="FunCoup" id="Q9VB11">
    <property type="interactions" value="174"/>
</dbReference>
<dbReference type="IntAct" id="Q9VB11">
    <property type="interactions" value="6"/>
</dbReference>
<dbReference type="STRING" id="7227.FBpp0303144"/>
<dbReference type="GlyGen" id="Q9VB11">
    <property type="glycosylation" value="3 sites"/>
</dbReference>
<dbReference type="PaxDb" id="7227-FBpp0303144"/>
<dbReference type="EnsemblMetazoa" id="FBtr0330108">
    <property type="protein sequence ID" value="FBpp0303141"/>
    <property type="gene ID" value="FBgn0039536"/>
</dbReference>
<dbReference type="GeneID" id="43324"/>
<dbReference type="KEGG" id="dme:Dmel_CG18437"/>
<dbReference type="UCSC" id="CG18437-RB">
    <property type="organism name" value="d. melanogaster"/>
</dbReference>
<dbReference type="AGR" id="FB:FBgn0039536"/>
<dbReference type="CTD" id="285175"/>
<dbReference type="FlyBase" id="FBgn0039536">
    <property type="gene designation" value="unc80"/>
</dbReference>
<dbReference type="VEuPathDB" id="VectorBase:FBgn0039536"/>
<dbReference type="eggNOG" id="ENOG502QSTP">
    <property type="taxonomic scope" value="Eukaryota"/>
</dbReference>
<dbReference type="GeneTree" id="ENSGT00640000091496"/>
<dbReference type="InParanoid" id="Q9VB11"/>
<dbReference type="OrthoDB" id="5584001at2759"/>
<dbReference type="Reactome" id="R-DME-2672351">
    <property type="pathway name" value="Stimuli-sensing channels"/>
</dbReference>
<dbReference type="BioGRID-ORCS" id="43324">
    <property type="hits" value="0 hits in 1 CRISPR screen"/>
</dbReference>
<dbReference type="GenomeRNAi" id="43324"/>
<dbReference type="PRO" id="PR:Q9VB11"/>
<dbReference type="Proteomes" id="UP000000803">
    <property type="component" value="Chromosome 3R"/>
</dbReference>
<dbReference type="Bgee" id="FBgn0039536">
    <property type="expression patterns" value="Expressed in alpha'/beta' Kenyon cell (Drosophila) in insect head and 102 other cell types or tissues"/>
</dbReference>
<dbReference type="ExpressionAtlas" id="Q9VB11">
    <property type="expression patterns" value="baseline and differential"/>
</dbReference>
<dbReference type="GO" id="GO:0030424">
    <property type="term" value="C:axon"/>
    <property type="evidence" value="ECO:0000318"/>
    <property type="project" value="GO_Central"/>
</dbReference>
<dbReference type="GO" id="GO:0034703">
    <property type="term" value="C:cation channel complex"/>
    <property type="evidence" value="ECO:0000353"/>
    <property type="project" value="FlyBase"/>
</dbReference>
<dbReference type="GO" id="GO:0005261">
    <property type="term" value="F:monoatomic cation channel activity"/>
    <property type="evidence" value="ECO:0000250"/>
    <property type="project" value="UniProtKB"/>
</dbReference>
<dbReference type="GO" id="GO:0045475">
    <property type="term" value="P:locomotor rhythm"/>
    <property type="evidence" value="ECO:0000315"/>
    <property type="project" value="FlyBase"/>
</dbReference>
<dbReference type="GO" id="GO:0055080">
    <property type="term" value="P:monoatomic cation homeostasis"/>
    <property type="evidence" value="ECO:0000250"/>
    <property type="project" value="UniProtKB"/>
</dbReference>
<dbReference type="InterPro" id="IPR046460">
    <property type="entry name" value="UNC80_C"/>
</dbReference>
<dbReference type="InterPro" id="IPR045852">
    <property type="entry name" value="UNC80_central"/>
</dbReference>
<dbReference type="InterPro" id="IPR031542">
    <property type="entry name" value="UNC80_N"/>
</dbReference>
<dbReference type="PANTHER" id="PTHR31781:SF1">
    <property type="entry name" value="PROTEIN UNC-80 HOMOLOG"/>
    <property type="match status" value="1"/>
</dbReference>
<dbReference type="PANTHER" id="PTHR31781">
    <property type="entry name" value="UNC80"/>
    <property type="match status" value="1"/>
</dbReference>
<dbReference type="Pfam" id="PF19424">
    <property type="entry name" value="UNC80"/>
    <property type="match status" value="1"/>
</dbReference>
<dbReference type="Pfam" id="PF20262">
    <property type="entry name" value="UNC80_C"/>
    <property type="match status" value="1"/>
</dbReference>
<dbReference type="Pfam" id="PF15778">
    <property type="entry name" value="UNC80_N"/>
    <property type="match status" value="1"/>
</dbReference>
<proteinExistence type="evidence at protein level"/>
<name>UNC80_DROME</name>
<sequence>MVTNAAGTAATGGATSNTTNNNNLQTNNNSHGANNNNDDFDFDQDSGLQDLGLPVSVQTFLWRQIAPFIRPKLGKLHESTCLFCQHAPGHHESKEACKSFEKVLVQNIQFGLSPPLTKGLGVIPRWRLLQGALPHVMHACAALLYNRVKDMQAIGPVETKLLYTMQWILLYAAEECADDEGGEDLGLGDAAEPKSKSIDQYLFSVPTITLFVYLFAPIIHHLKESDFQNFRLENGIKLWQGMWDNRAPGAPCFTAPVKPKARNLLCAPTPKGSTDVFPARKHSLSADAMSPKADSPQSGISDYGRQDEEGSWVSSPKEFAFPETIPEEASSVEDERVVIFRLPSAPQLMDNSFFTADASLLQQQQSQSRRGSRQSMNSRDKDKVPSTKFEFDQQELMRGASMKEKRSASIEKETDSDKSESIKADVSAATFLDVAVLRCLFISHWQEEGIFWSLQYLYNRLSDIGEEAAITLNQPRKRSNSLPIPQIEISLYQGPGSNSRDSPGSSVVKDYIEIPDPSPTVTACVAEEPQSAPSTTERRGSEKKKRVKMADLRAFVETKMFSKSEKNLEKVGLDTNSANGKTPLQHAEYHRSLDTGEKKLSRSASMISREPASNLIKGKSMPSLRFYRYVEPPKAPRPSQATCPRSTAFYPRNPIITVTEHTPTPSPDYMKRQGSIDSQLDALSNGGSIAGMTGNGGGNGSTGMGSSTTRYRGQMLRSHTDSHIDYTGVDESEAPGSSFYITRDGGIDYEIILLAISNVFKRDPAQVCSLRVLEAGLNICELLIEMGVLKLGEHAHEISMSITRRALQVLGCPHGCNDGVRGPPADFLRNQCQKILSRMLRQAGQRTKRFMQEMVKTSPLPELIDYFHAFLAFCVDPSSLLSPLSQGGYSTNFSGGMSGGAEAQVVGAVFKPLVSRFVEASKDLKGPENIALYGDIRQLVTYVKGAHGGPFRLVALSGILAVTPRPHKKGPSAQTTRVIRHIPQANANQSLQNDDNRSQRRLLLKKRSTSSACASLLETEACEEHYKTSQSPLSNFRRRTTGVRPTLTPRHSERALLSDSTSSSERNSLGRLSGLVRWFRGTPKEASSIDLEIGSLNPEISSTFMRHASLKIQRGRSSDGIGRSIQRAKRRVERRLNRFGGIVKGKKKVGGIEETADFSRRSSSDMCDGPRESEVVILKERKLVPTEPVRVGMLRLSFLLETCAPGSFPDPQLVAAVLDLPQAPLVARATFLLECAHFVHLCNKGQWPAWMKQNVGSYRASGANINLNQMKQQVSQTSARRTHILQRAAGKMFHQWAEMVGARLEEILFTERLQYEAVNASLTDPEKQRELLQQDEEEDFLDETSVNPHGNDCPHSLKLIACVLLFEITAFLRDTYLMLPKTSKLIHRDKPAPWEKVYREANRRWSMALSSMGHSQTSAQSLQSIAAGNDGAGQSERKISFVLHEPDNESENSSNTTLTKEGEEARRPTTSAVRPFLLRRGTATTTGGSFKRRSLKLRRNTKDSKDIETDFNMQSRRKVSSLSDRSDTSEQGMISGGEESPGILSDDQQPESPTDSNENDDTAKNMPWLKAIIDLMSSYNYYCTHKGYCHPFCYKRHMRSCTRLVKATRKVYGEEFGFTFDADHPNVEPTIITSSKPHTSRARSTRKVSEQSSTQTSPSKRKDSLSRKDRISDDPDLEMAEKLAKAFRQEKEKKMQEEPPILKFIRIHIRNLFHFPLATLLKGAVVLTEEMVIEAMPAAWELLLETNHDTATSSAAVFLMGSVKAQNFAFDIMQRALKHKDPDIRIGAIQRYLVLWKCRFHVWPRMEENAHDVTFKVPPGGIEFTLPSPKIGIESLPVVDPPWMPVQQTKDMDVTLNQDRHRSLVTATKSRKMQQTEAIRNALRQQRDKQRAERHSFLITMIPISQQASHEPGMEKLEDHEIEEDLDGTRMSSHLHHAHSLFPSVLCSSVMQIVGCLDDAAIGSDGNAVYEIAYQVIWVCLVEESALFLRYVFERLTRDRQDQMFKLLRHLIRFVPRLPQQAAFALYNSIIGYIMFYVRSSNELKQELVGSALSVLWMVVHSVHGIMFKDLKQILRKEQCDASILLTANVPAAKKIVVHGPADDDYNIPSQFPVQEDTLFCQLLKEALDYYPIDEKNTSHYCLVDYKSSKILNPNWYIRDLYFFKRSQYPEVRLMLMRPEESFLALQKQELTKKFVEIGKVHLTWAILKNVDMVVQRVVFLHEELMKLPSFPRKALEVDLDLHHGGEYGKVLLGLDVLHKFMWVRLIARMFEAMAGNFAYSADIQLFLNVLSGASILHAEDSCIMRYVMATFINAAFNFKNIFSTNGYFMIMPTLLQVYSLHQTNKLITTTIEYAVKQFYLLNRKPFILQMFGSVSAILDTDEDGTYGEAHKVQSSCLFNLLLSLEDPSPDPLNIAELVKEPKPLKAIDFCYHDEDDDVTVLDCITLCVMVVSYSAESTRGYQMLIILEAILPCYLQQIQSPSYIPLQGKSERDIILQLAVAIRTMVHNCEGLAKSYNGPYRNSPEHKGSSQRNCSRGPPCSPGLDFEEETHPKYMTDARTKNMMDSAEDSEMIRTEYRRPRDVLLSVVADFLTKSTVRLAELAKKMPSDTKPTEVLDAKCHIRLADIAHSLLKVSPYDPESMACRGLQRYMQAVLPRAEWSNDTLRNALVTILRRIDKVFLKISKKPSIRRNTDWEAAAGLLKGIHETIIRHSYVLHWQQMKTLISTVQNLIVNEPGIPEGVSSAGAALMSQNPPAFFCSAVVRLVALQVVSPVDCFSLVQICGGSSEFATQEKAEGFLMHLIMPLCLKVCSGRGVSDVGELKMSDVSFLLTAVLNAMSPPAGRTGQAVSQINRVTGDLRAGSLTFTGSRDAKRPARISGSLYQAAFLALRIVCICFESRLSNEWPRIVRVMRDLGRRNEAAPDLWSFMEFVVTHRTPLYIVLLPFILHKISQPPIGDHERHMQFIIRERLRGTPPQGGIKSKGALLLELARELRDLRDELEEKRYDRESSEQKKSDTPAATSAAEAHKSQQRPSLISIFTGTTTGQASHSHVSAVPIDSRSGSGGICTPSDTLSQQTLHPPRESLSSSSTGRDPHTTTSESQSGEADAGSAPTLVGATPSGSGHGSGGGIGTGAASAVPSHLSHSQSLQQAPFKAQPPKLRFVSSVEFRHSSGETSTTPLSPESPAEDSSGDHTRSRLQRSKAASRKTFRLKRSRLTPMEPPSIVTSQEEQAPQAQAKTLGEISWDSVSQTSSTSGYRDNNSLQTGLLSPDGSLGGLTLGRSPSQHSLLMVFEGQDEDTLI</sequence>
<keyword id="KW-0472">Membrane</keyword>
<keyword id="KW-1185">Reference proteome</keyword>
<keyword id="KW-0812">Transmembrane</keyword>
<keyword id="KW-1133">Transmembrane helix</keyword>
<accession>Q9VB11</accession>
<reference key="1">
    <citation type="journal article" date="2000" name="Science">
        <title>The genome sequence of Drosophila melanogaster.</title>
        <authorList>
            <person name="Adams M.D."/>
            <person name="Celniker S.E."/>
            <person name="Holt R.A."/>
            <person name="Evans C.A."/>
            <person name="Gocayne J.D."/>
            <person name="Amanatides P.G."/>
            <person name="Scherer S.E."/>
            <person name="Li P.W."/>
            <person name="Hoskins R.A."/>
            <person name="Galle R.F."/>
            <person name="George R.A."/>
            <person name="Lewis S.E."/>
            <person name="Richards S."/>
            <person name="Ashburner M."/>
            <person name="Henderson S.N."/>
            <person name="Sutton G.G."/>
            <person name="Wortman J.R."/>
            <person name="Yandell M.D."/>
            <person name="Zhang Q."/>
            <person name="Chen L.X."/>
            <person name="Brandon R.C."/>
            <person name="Rogers Y.-H.C."/>
            <person name="Blazej R.G."/>
            <person name="Champe M."/>
            <person name="Pfeiffer B.D."/>
            <person name="Wan K.H."/>
            <person name="Doyle C."/>
            <person name="Baxter E.G."/>
            <person name="Helt G."/>
            <person name="Nelson C.R."/>
            <person name="Miklos G.L.G."/>
            <person name="Abril J.F."/>
            <person name="Agbayani A."/>
            <person name="An H.-J."/>
            <person name="Andrews-Pfannkoch C."/>
            <person name="Baldwin D."/>
            <person name="Ballew R.M."/>
            <person name="Basu A."/>
            <person name="Baxendale J."/>
            <person name="Bayraktaroglu L."/>
            <person name="Beasley E.M."/>
            <person name="Beeson K.Y."/>
            <person name="Benos P.V."/>
            <person name="Berman B.P."/>
            <person name="Bhandari D."/>
            <person name="Bolshakov S."/>
            <person name="Borkova D."/>
            <person name="Botchan M.R."/>
            <person name="Bouck J."/>
            <person name="Brokstein P."/>
            <person name="Brottier P."/>
            <person name="Burtis K.C."/>
            <person name="Busam D.A."/>
            <person name="Butler H."/>
            <person name="Cadieu E."/>
            <person name="Center A."/>
            <person name="Chandra I."/>
            <person name="Cherry J.M."/>
            <person name="Cawley S."/>
            <person name="Dahlke C."/>
            <person name="Davenport L.B."/>
            <person name="Davies P."/>
            <person name="de Pablos B."/>
            <person name="Delcher A."/>
            <person name="Deng Z."/>
            <person name="Mays A.D."/>
            <person name="Dew I."/>
            <person name="Dietz S.M."/>
            <person name="Dodson K."/>
            <person name="Doup L.E."/>
            <person name="Downes M."/>
            <person name="Dugan-Rocha S."/>
            <person name="Dunkov B.C."/>
            <person name="Dunn P."/>
            <person name="Durbin K.J."/>
            <person name="Evangelista C.C."/>
            <person name="Ferraz C."/>
            <person name="Ferriera S."/>
            <person name="Fleischmann W."/>
            <person name="Fosler C."/>
            <person name="Gabrielian A.E."/>
            <person name="Garg N.S."/>
            <person name="Gelbart W.M."/>
            <person name="Glasser K."/>
            <person name="Glodek A."/>
            <person name="Gong F."/>
            <person name="Gorrell J.H."/>
            <person name="Gu Z."/>
            <person name="Guan P."/>
            <person name="Harris M."/>
            <person name="Harris N.L."/>
            <person name="Harvey D.A."/>
            <person name="Heiman T.J."/>
            <person name="Hernandez J.R."/>
            <person name="Houck J."/>
            <person name="Hostin D."/>
            <person name="Houston K.A."/>
            <person name="Howland T.J."/>
            <person name="Wei M.-H."/>
            <person name="Ibegwam C."/>
            <person name="Jalali M."/>
            <person name="Kalush F."/>
            <person name="Karpen G.H."/>
            <person name="Ke Z."/>
            <person name="Kennison J.A."/>
            <person name="Ketchum K.A."/>
            <person name="Kimmel B.E."/>
            <person name="Kodira C.D."/>
            <person name="Kraft C.L."/>
            <person name="Kravitz S."/>
            <person name="Kulp D."/>
            <person name="Lai Z."/>
            <person name="Lasko P."/>
            <person name="Lei Y."/>
            <person name="Levitsky A.A."/>
            <person name="Li J.H."/>
            <person name="Li Z."/>
            <person name="Liang Y."/>
            <person name="Lin X."/>
            <person name="Liu X."/>
            <person name="Mattei B."/>
            <person name="McIntosh T.C."/>
            <person name="McLeod M.P."/>
            <person name="McPherson D."/>
            <person name="Merkulov G."/>
            <person name="Milshina N.V."/>
            <person name="Mobarry C."/>
            <person name="Morris J."/>
            <person name="Moshrefi A."/>
            <person name="Mount S.M."/>
            <person name="Moy M."/>
            <person name="Murphy B."/>
            <person name="Murphy L."/>
            <person name="Muzny D.M."/>
            <person name="Nelson D.L."/>
            <person name="Nelson D.R."/>
            <person name="Nelson K.A."/>
            <person name="Nixon K."/>
            <person name="Nusskern D.R."/>
            <person name="Pacleb J.M."/>
            <person name="Palazzolo M."/>
            <person name="Pittman G.S."/>
            <person name="Pan S."/>
            <person name="Pollard J."/>
            <person name="Puri V."/>
            <person name="Reese M.G."/>
            <person name="Reinert K."/>
            <person name="Remington K."/>
            <person name="Saunders R.D.C."/>
            <person name="Scheeler F."/>
            <person name="Shen H."/>
            <person name="Shue B.C."/>
            <person name="Siden-Kiamos I."/>
            <person name="Simpson M."/>
            <person name="Skupski M.P."/>
            <person name="Smith T.J."/>
            <person name="Spier E."/>
            <person name="Spradling A.C."/>
            <person name="Stapleton M."/>
            <person name="Strong R."/>
            <person name="Sun E."/>
            <person name="Svirskas R."/>
            <person name="Tector C."/>
            <person name="Turner R."/>
            <person name="Venter E."/>
            <person name="Wang A.H."/>
            <person name="Wang X."/>
            <person name="Wang Z.-Y."/>
            <person name="Wassarman D.A."/>
            <person name="Weinstock G.M."/>
            <person name="Weissenbach J."/>
            <person name="Williams S.M."/>
            <person name="Woodage T."/>
            <person name="Worley K.C."/>
            <person name="Wu D."/>
            <person name="Yang S."/>
            <person name="Yao Q.A."/>
            <person name="Ye J."/>
            <person name="Yeh R.-F."/>
            <person name="Zaveri J.S."/>
            <person name="Zhan M."/>
            <person name="Zhang G."/>
            <person name="Zhao Q."/>
            <person name="Zheng L."/>
            <person name="Zheng X.H."/>
            <person name="Zhong F.N."/>
            <person name="Zhong W."/>
            <person name="Zhou X."/>
            <person name="Zhu S.C."/>
            <person name="Zhu X."/>
            <person name="Smith H.O."/>
            <person name="Gibbs R.A."/>
            <person name="Myers E.W."/>
            <person name="Rubin G.M."/>
            <person name="Venter J.C."/>
        </authorList>
    </citation>
    <scope>NUCLEOTIDE SEQUENCE [LARGE SCALE GENOMIC DNA]</scope>
    <source>
        <strain>Berkeley</strain>
    </source>
</reference>
<reference key="2">
    <citation type="journal article" date="2002" name="Genome Biol.">
        <title>Annotation of the Drosophila melanogaster euchromatic genome: a systematic review.</title>
        <authorList>
            <person name="Misra S."/>
            <person name="Crosby M.A."/>
            <person name="Mungall C.J."/>
            <person name="Matthews B.B."/>
            <person name="Campbell K.S."/>
            <person name="Hradecky P."/>
            <person name="Huang Y."/>
            <person name="Kaminker J.S."/>
            <person name="Millburn G.H."/>
            <person name="Prochnik S.E."/>
            <person name="Smith C.D."/>
            <person name="Tupy J.L."/>
            <person name="Whitfield E.J."/>
            <person name="Bayraktaroglu L."/>
            <person name="Berman B.P."/>
            <person name="Bettencourt B.R."/>
            <person name="Celniker S.E."/>
            <person name="de Grey A.D.N.J."/>
            <person name="Drysdale R.A."/>
            <person name="Harris N.L."/>
            <person name="Richter J."/>
            <person name="Russo S."/>
            <person name="Schroeder A.J."/>
            <person name="Shu S.Q."/>
            <person name="Stapleton M."/>
            <person name="Yamada C."/>
            <person name="Ashburner M."/>
            <person name="Gelbart W.M."/>
            <person name="Rubin G.M."/>
            <person name="Lewis S.E."/>
        </authorList>
    </citation>
    <scope>GENOME REANNOTATION</scope>
    <source>
        <strain>Berkeley</strain>
    </source>
</reference>
<reference key="3">
    <citation type="journal article" date="2007" name="Curr. Biol.">
        <title>A putative cation channel and its novel regulator: cross-species conservation of effects on general anesthesia.</title>
        <authorList>
            <person name="Humphrey J.A."/>
            <person name="Hamming K.S."/>
            <person name="Thacker C.M."/>
            <person name="Scott R.L."/>
            <person name="Sedensky M.M."/>
            <person name="Snutch T.P."/>
            <person name="Morgan P.G."/>
            <person name="Nash H.A."/>
        </authorList>
    </citation>
    <scope>IDENTIFICATION</scope>
</reference>
<reference key="4">
    <citation type="journal article" date="2013" name="PLoS ONE">
        <title>UNC79 and UNC80, putative auxiliary subunits of the NARROW ABDOMEN ion channel, are indispensable for robust circadian locomotor rhythms in Drosophila.</title>
        <authorList>
            <person name="Lear B.C."/>
            <person name="Darrah E.J."/>
            <person name="Aldrich B.T."/>
            <person name="Gebre S."/>
            <person name="Scott R.L."/>
            <person name="Nash H.A."/>
            <person name="Allada R."/>
        </authorList>
    </citation>
    <scope>FUNCTION</scope>
    <scope>INTERACTION WITH UNC79 AND NA</scope>
    <scope>DISRUPTION PHENOTYPE</scope>
</reference>
<feature type="chain" id="PRO_0000367809" description="Protein unc-80 homolog">
    <location>
        <begin position="1"/>
        <end position="3303"/>
    </location>
</feature>
<feature type="transmembrane region" description="Helical" evidence="1">
    <location>
        <begin position="202"/>
        <end position="222"/>
    </location>
</feature>
<feature type="transmembrane region" description="Helical" evidence="1">
    <location>
        <begin position="1969"/>
        <end position="1989"/>
    </location>
</feature>
<feature type="transmembrane region" description="Helical" evidence="1">
    <location>
        <begin position="2018"/>
        <end position="2038"/>
    </location>
</feature>
<feature type="transmembrane region" description="Helical" evidence="1">
    <location>
        <begin position="2048"/>
        <end position="2068"/>
    </location>
</feature>
<feature type="region of interest" description="Disordered" evidence="2">
    <location>
        <begin position="1"/>
        <end position="43"/>
    </location>
</feature>
<feature type="region of interest" description="Disordered" evidence="2">
    <location>
        <begin position="284"/>
        <end position="316"/>
    </location>
</feature>
<feature type="region of interest" description="Disordered" evidence="2">
    <location>
        <begin position="361"/>
        <end position="422"/>
    </location>
</feature>
<feature type="region of interest" description="Disordered" evidence="2">
    <location>
        <begin position="491"/>
        <end position="512"/>
    </location>
</feature>
<feature type="region of interest" description="Disordered" evidence="2">
    <location>
        <begin position="526"/>
        <end position="546"/>
    </location>
</feature>
<feature type="region of interest" description="Disordered" evidence="2">
    <location>
        <begin position="1036"/>
        <end position="1067"/>
    </location>
</feature>
<feature type="region of interest" description="Disordered" evidence="2">
    <location>
        <begin position="1443"/>
        <end position="1563"/>
    </location>
</feature>
<feature type="region of interest" description="Disordered" evidence="2">
    <location>
        <begin position="1627"/>
        <end position="1671"/>
    </location>
</feature>
<feature type="region of interest" description="Disordered" evidence="2">
    <location>
        <begin position="2518"/>
        <end position="2550"/>
    </location>
</feature>
<feature type="region of interest" description="Disordered" evidence="2">
    <location>
        <begin position="3003"/>
        <end position="3158"/>
    </location>
</feature>
<feature type="region of interest" description="Disordered" evidence="2">
    <location>
        <begin position="3170"/>
        <end position="3262"/>
    </location>
</feature>
<feature type="compositionally biased region" description="Low complexity" evidence="2">
    <location>
        <begin position="1"/>
        <end position="37"/>
    </location>
</feature>
<feature type="compositionally biased region" description="Low complexity" evidence="2">
    <location>
        <begin position="361"/>
        <end position="377"/>
    </location>
</feature>
<feature type="compositionally biased region" description="Basic and acidic residues" evidence="2">
    <location>
        <begin position="378"/>
        <end position="391"/>
    </location>
</feature>
<feature type="compositionally biased region" description="Basic and acidic residues" evidence="2">
    <location>
        <begin position="401"/>
        <end position="422"/>
    </location>
</feature>
<feature type="compositionally biased region" description="Polar residues" evidence="2">
    <location>
        <begin position="495"/>
        <end position="505"/>
    </location>
</feature>
<feature type="compositionally biased region" description="Polar residues" evidence="2">
    <location>
        <begin position="1058"/>
        <end position="1067"/>
    </location>
</feature>
<feature type="compositionally biased region" description="Basic residues" evidence="2">
    <location>
        <begin position="1490"/>
        <end position="1499"/>
    </location>
</feature>
<feature type="compositionally biased region" description="Polar residues" evidence="2">
    <location>
        <begin position="1546"/>
        <end position="1556"/>
    </location>
</feature>
<feature type="compositionally biased region" description="Basic and acidic residues" evidence="2">
    <location>
        <begin position="1660"/>
        <end position="1671"/>
    </location>
</feature>
<feature type="compositionally biased region" description="Basic and acidic residues" evidence="2">
    <location>
        <begin position="3003"/>
        <end position="3018"/>
    </location>
</feature>
<feature type="compositionally biased region" description="Polar residues" evidence="2">
    <location>
        <begin position="3033"/>
        <end position="3053"/>
    </location>
</feature>
<feature type="compositionally biased region" description="Polar residues" evidence="2">
    <location>
        <begin position="3071"/>
        <end position="3106"/>
    </location>
</feature>
<feature type="compositionally biased region" description="Gly residues" evidence="2">
    <location>
        <begin position="3124"/>
        <end position="3134"/>
    </location>
</feature>
<feature type="compositionally biased region" description="Low complexity" evidence="2">
    <location>
        <begin position="3135"/>
        <end position="3152"/>
    </location>
</feature>
<feature type="compositionally biased region" description="Basic residues" evidence="2">
    <location>
        <begin position="3198"/>
        <end position="3217"/>
    </location>
</feature>
<feature type="compositionally biased region" description="Polar residues" evidence="2">
    <location>
        <begin position="3226"/>
        <end position="3239"/>
    </location>
</feature>
<feature type="compositionally biased region" description="Low complexity" evidence="2">
    <location>
        <begin position="3246"/>
        <end position="3257"/>
    </location>
</feature>
<comment type="function">
    <text evidence="3">Component of the na (narrow abdomen) sodium channel complex. In the circadian clock neurons it functions with na and unc79 to promote circadian rhythmicity.</text>
</comment>
<comment type="subunit">
    <text evidence="3">Interacts with unc79 and na. Can interact with unc79 independently of na.</text>
</comment>
<comment type="subcellular location">
    <subcellularLocation>
        <location evidence="1">Membrane</location>
        <topology evidence="1">Multi-pass membrane protein</topology>
    </subcellularLocation>
</comment>
<comment type="disruption phenotype">
    <text evidence="3">Severe disruptions in circadian rhythmicity. Decreases anticipatory behaviors and free-running rhythmicity. RNAi-mediated knockdown in pacemaker neurons decreases anticipatory behaviors under constant dark (DD) conditions but has no effect on light-dark (LD) rhythmic behavior.</text>
</comment>
<comment type="similarity">
    <text evidence="4">Belongs to the unc-80 family.</text>
</comment>
<gene>
    <name evidence="5" type="primary">unc80</name>
    <name evidence="5" type="ORF">CG18437</name>
</gene>
<protein>
    <recommendedName>
        <fullName>Protein unc-80 homolog</fullName>
    </recommendedName>
</protein>
<organism>
    <name type="scientific">Drosophila melanogaster</name>
    <name type="common">Fruit fly</name>
    <dbReference type="NCBI Taxonomy" id="7227"/>
    <lineage>
        <taxon>Eukaryota</taxon>
        <taxon>Metazoa</taxon>
        <taxon>Ecdysozoa</taxon>
        <taxon>Arthropoda</taxon>
        <taxon>Hexapoda</taxon>
        <taxon>Insecta</taxon>
        <taxon>Pterygota</taxon>
        <taxon>Neoptera</taxon>
        <taxon>Endopterygota</taxon>
        <taxon>Diptera</taxon>
        <taxon>Brachycera</taxon>
        <taxon>Muscomorpha</taxon>
        <taxon>Ephydroidea</taxon>
        <taxon>Drosophilidae</taxon>
        <taxon>Drosophila</taxon>
        <taxon>Sophophora</taxon>
    </lineage>
</organism>